<accession>P77414</accession>
<evidence type="ECO:0000305" key="1"/>
<gene>
    <name type="primary">wcaA</name>
    <name type="ordered locus">b2059</name>
    <name type="ordered locus">JW2044</name>
</gene>
<sequence>MKNNPLISIYMPTWNRQQLAIRAIKSVLRQDYSNWEMIIVDDCSTSWEQLQQYVTALNDPRITYIHNDINSGACAVRNQAIMLAQGEYITGIDDDDEWTPNRLSVFLAHKQQLVTHAFLYANDYVCQGEVYSQPASLPLYPKSPYSRRLFYKRNIIGNQVFTWAWRFKECLFDTELKAAQDYDIFLRMVVEYGEPWKVEEATQILHINHGEMQITSSPKKFSGYFHFYRKHKDKFDRASKKYQLFTLYQIRNKRMTWRTLLTLLSVRNGKRLADGIRGR</sequence>
<name>WCAA_ECOLI</name>
<protein>
    <recommendedName>
        <fullName>Putative colanic acid biosynthesis glycosyl transferase WcaA</fullName>
    </recommendedName>
</protein>
<proteinExistence type="predicted"/>
<keyword id="KW-0448">Lipopolysaccharide biosynthesis</keyword>
<keyword id="KW-1185">Reference proteome</keyword>
<keyword id="KW-0808">Transferase</keyword>
<comment type="pathway">
    <text>Slime biogenesis; slime polysaccharide biosynthesis.</text>
</comment>
<comment type="similarity">
    <text evidence="1">To R.meliloti ExoO.</text>
</comment>
<reference key="1">
    <citation type="journal article" date="1996" name="J. Bacteriol.">
        <title>Organization of the Escherichia coli K-12 gene cluster responsible for production of the extracellular polysaccharide colanic acid.</title>
        <authorList>
            <person name="Stevenson G."/>
            <person name="Andrianopoulos K."/>
            <person name="Hobbs M."/>
            <person name="Reeves P.R."/>
        </authorList>
    </citation>
    <scope>NUCLEOTIDE SEQUENCE [GENOMIC DNA]</scope>
    <source>
        <strain>K12</strain>
    </source>
</reference>
<reference key="2">
    <citation type="journal article" date="1996" name="DNA Res.">
        <title>A 460-kb DNA sequence of the Escherichia coli K-12 genome corresponding to the 40.1-50.0 min region on the linkage map.</title>
        <authorList>
            <person name="Itoh T."/>
            <person name="Aiba H."/>
            <person name="Baba T."/>
            <person name="Fujita K."/>
            <person name="Hayashi K."/>
            <person name="Inada T."/>
            <person name="Isono K."/>
            <person name="Kasai H."/>
            <person name="Kimura S."/>
            <person name="Kitakawa M."/>
            <person name="Kitagawa M."/>
            <person name="Makino K."/>
            <person name="Miki T."/>
            <person name="Mizobuchi K."/>
            <person name="Mori H."/>
            <person name="Mori T."/>
            <person name="Motomura K."/>
            <person name="Nakade S."/>
            <person name="Nakamura Y."/>
            <person name="Nashimoto H."/>
            <person name="Nishio Y."/>
            <person name="Oshima T."/>
            <person name="Saito N."/>
            <person name="Sampei G."/>
            <person name="Seki Y."/>
            <person name="Sivasundaram S."/>
            <person name="Tagami H."/>
            <person name="Takeda J."/>
            <person name="Takemoto K."/>
            <person name="Wada C."/>
            <person name="Yamamoto Y."/>
            <person name="Horiuchi T."/>
        </authorList>
    </citation>
    <scope>NUCLEOTIDE SEQUENCE [LARGE SCALE GENOMIC DNA]</scope>
    <source>
        <strain>K12 / W3110 / ATCC 27325 / DSM 5911</strain>
    </source>
</reference>
<reference key="3">
    <citation type="journal article" date="1997" name="Science">
        <title>The complete genome sequence of Escherichia coli K-12.</title>
        <authorList>
            <person name="Blattner F.R."/>
            <person name="Plunkett G. III"/>
            <person name="Bloch C.A."/>
            <person name="Perna N.T."/>
            <person name="Burland V."/>
            <person name="Riley M."/>
            <person name="Collado-Vides J."/>
            <person name="Glasner J.D."/>
            <person name="Rode C.K."/>
            <person name="Mayhew G.F."/>
            <person name="Gregor J."/>
            <person name="Davis N.W."/>
            <person name="Kirkpatrick H.A."/>
            <person name="Goeden M.A."/>
            <person name="Rose D.J."/>
            <person name="Mau B."/>
            <person name="Shao Y."/>
        </authorList>
    </citation>
    <scope>NUCLEOTIDE SEQUENCE [LARGE SCALE GENOMIC DNA]</scope>
    <source>
        <strain>K12 / MG1655 / ATCC 47076</strain>
    </source>
</reference>
<reference key="4">
    <citation type="journal article" date="2006" name="Mol. Syst. Biol.">
        <title>Highly accurate genome sequences of Escherichia coli K-12 strains MG1655 and W3110.</title>
        <authorList>
            <person name="Hayashi K."/>
            <person name="Morooka N."/>
            <person name="Yamamoto Y."/>
            <person name="Fujita K."/>
            <person name="Isono K."/>
            <person name="Choi S."/>
            <person name="Ohtsubo E."/>
            <person name="Baba T."/>
            <person name="Wanner B.L."/>
            <person name="Mori H."/>
            <person name="Horiuchi T."/>
        </authorList>
    </citation>
    <scope>NUCLEOTIDE SEQUENCE [LARGE SCALE GENOMIC DNA]</scope>
    <source>
        <strain>K12 / W3110 / ATCC 27325 / DSM 5911</strain>
    </source>
</reference>
<feature type="chain" id="PRO_0000065953" description="Putative colanic acid biosynthesis glycosyl transferase WcaA">
    <location>
        <begin position="1"/>
        <end position="279"/>
    </location>
</feature>
<organism>
    <name type="scientific">Escherichia coli (strain K12)</name>
    <dbReference type="NCBI Taxonomy" id="83333"/>
    <lineage>
        <taxon>Bacteria</taxon>
        <taxon>Pseudomonadati</taxon>
        <taxon>Pseudomonadota</taxon>
        <taxon>Gammaproteobacteria</taxon>
        <taxon>Enterobacterales</taxon>
        <taxon>Enterobacteriaceae</taxon>
        <taxon>Escherichia</taxon>
    </lineage>
</organism>
<dbReference type="EMBL" id="U38473">
    <property type="protein sequence ID" value="AAC77836.1"/>
    <property type="molecule type" value="Genomic_DNA"/>
</dbReference>
<dbReference type="EMBL" id="U00096">
    <property type="protein sequence ID" value="AAC75120.1"/>
    <property type="molecule type" value="Genomic_DNA"/>
</dbReference>
<dbReference type="EMBL" id="AP009048">
    <property type="protein sequence ID" value="BAA15912.1"/>
    <property type="molecule type" value="Genomic_DNA"/>
</dbReference>
<dbReference type="PIR" id="B64972">
    <property type="entry name" value="B64972"/>
</dbReference>
<dbReference type="RefSeq" id="NP_416563.1">
    <property type="nucleotide sequence ID" value="NC_000913.3"/>
</dbReference>
<dbReference type="RefSeq" id="WP_000794699.1">
    <property type="nucleotide sequence ID" value="NZ_LN832404.1"/>
</dbReference>
<dbReference type="SMR" id="P77414"/>
<dbReference type="BioGRID" id="4259687">
    <property type="interactions" value="327"/>
</dbReference>
<dbReference type="FunCoup" id="P77414">
    <property type="interactions" value="227"/>
</dbReference>
<dbReference type="IntAct" id="P77414">
    <property type="interactions" value="8"/>
</dbReference>
<dbReference type="STRING" id="511145.b2059"/>
<dbReference type="CAZy" id="GT2">
    <property type="family name" value="Glycosyltransferase Family 2"/>
</dbReference>
<dbReference type="PaxDb" id="511145-b2059"/>
<dbReference type="EnsemblBacteria" id="AAC75120">
    <property type="protein sequence ID" value="AAC75120"/>
    <property type="gene ID" value="b2059"/>
</dbReference>
<dbReference type="GeneID" id="946570"/>
<dbReference type="KEGG" id="ecj:JW2044"/>
<dbReference type="KEGG" id="eco:b2059"/>
<dbReference type="KEGG" id="ecoc:C3026_11585"/>
<dbReference type="PATRIC" id="fig|1411691.4.peg.192"/>
<dbReference type="EchoBASE" id="EB3339"/>
<dbReference type="eggNOG" id="COG0463">
    <property type="taxonomic scope" value="Bacteria"/>
</dbReference>
<dbReference type="HOGENOM" id="CLU_025996_0_5_6"/>
<dbReference type="InParanoid" id="P77414"/>
<dbReference type="OMA" id="NFIYHPA"/>
<dbReference type="OrthoDB" id="9801954at2"/>
<dbReference type="PhylomeDB" id="P77414"/>
<dbReference type="BioCyc" id="EcoCyc:G7104-MONOMER"/>
<dbReference type="BioCyc" id="MetaCyc:G7104-MONOMER"/>
<dbReference type="UniPathway" id="UPA00936"/>
<dbReference type="PRO" id="PR:P77414"/>
<dbReference type="Proteomes" id="UP000000625">
    <property type="component" value="Chromosome"/>
</dbReference>
<dbReference type="GO" id="GO:0015020">
    <property type="term" value="F:glucuronosyltransferase activity"/>
    <property type="evidence" value="ECO:0000314"/>
    <property type="project" value="EcoCyc"/>
</dbReference>
<dbReference type="GO" id="GO:0016757">
    <property type="term" value="F:glycosyltransferase activity"/>
    <property type="evidence" value="ECO:0000318"/>
    <property type="project" value="GO_Central"/>
</dbReference>
<dbReference type="GO" id="GO:0009242">
    <property type="term" value="P:colanic acid biosynthetic process"/>
    <property type="evidence" value="ECO:0000314"/>
    <property type="project" value="EcoCyc"/>
</dbReference>
<dbReference type="GO" id="GO:0009103">
    <property type="term" value="P:lipopolysaccharide biosynthetic process"/>
    <property type="evidence" value="ECO:0007669"/>
    <property type="project" value="UniProtKB-KW"/>
</dbReference>
<dbReference type="GO" id="GO:0045228">
    <property type="term" value="P:slime layer polysaccharide biosynthetic process"/>
    <property type="evidence" value="ECO:0007669"/>
    <property type="project" value="UniProtKB-UniPathway"/>
</dbReference>
<dbReference type="FunFam" id="3.90.550.10:FF:000052">
    <property type="entry name" value="Colanic acid biosynthesis glycosyltransferase WcaA"/>
    <property type="match status" value="1"/>
</dbReference>
<dbReference type="Gene3D" id="3.90.550.10">
    <property type="entry name" value="Spore Coat Polysaccharide Biosynthesis Protein SpsA, Chain A"/>
    <property type="match status" value="1"/>
</dbReference>
<dbReference type="InterPro" id="IPR024009">
    <property type="entry name" value="Colanic_acid_synth_WcaA"/>
</dbReference>
<dbReference type="InterPro" id="IPR001173">
    <property type="entry name" value="Glyco_trans_2-like"/>
</dbReference>
<dbReference type="InterPro" id="IPR029044">
    <property type="entry name" value="Nucleotide-diphossugar_trans"/>
</dbReference>
<dbReference type="NCBIfam" id="NF007453">
    <property type="entry name" value="PRK10018.1"/>
    <property type="match status" value="1"/>
</dbReference>
<dbReference type="NCBIfam" id="TIGR04017">
    <property type="entry name" value="WcaA"/>
    <property type="match status" value="1"/>
</dbReference>
<dbReference type="PANTHER" id="PTHR22916">
    <property type="entry name" value="GLYCOSYLTRANSFERASE"/>
    <property type="match status" value="1"/>
</dbReference>
<dbReference type="PANTHER" id="PTHR22916:SF3">
    <property type="entry name" value="UDP-GLCNAC:BETAGAL BETA-1,3-N-ACETYLGLUCOSAMINYLTRANSFERASE-LIKE PROTEIN 1"/>
    <property type="match status" value="1"/>
</dbReference>
<dbReference type="Pfam" id="PF00535">
    <property type="entry name" value="Glycos_transf_2"/>
    <property type="match status" value="1"/>
</dbReference>
<dbReference type="SUPFAM" id="SSF53448">
    <property type="entry name" value="Nucleotide-diphospho-sugar transferases"/>
    <property type="match status" value="1"/>
</dbReference>